<sequence length="209" mass="23251">MTTKKRTASSTRWMQEHFDDHYVKLAQKRGLRSRAAFKLEEIQEKDHLIKQGMTVVDLGAAPGGWSQVAAKLTGDKGKVIACDILPMDPIVGVDFLQGDFREDKVLQALLERVGQDKVDVVLSDMAPNMSGSGAVDQPRAMYLVELALDMCHQVLTPNGCFAVKVFQGEGFDDYIKTVKQAFKVVKTRKPDSSRARSREVYLVATGYKL</sequence>
<organism>
    <name type="scientific">Shewanella frigidimarina (strain NCIMB 400)</name>
    <dbReference type="NCBI Taxonomy" id="318167"/>
    <lineage>
        <taxon>Bacteria</taxon>
        <taxon>Pseudomonadati</taxon>
        <taxon>Pseudomonadota</taxon>
        <taxon>Gammaproteobacteria</taxon>
        <taxon>Alteromonadales</taxon>
        <taxon>Shewanellaceae</taxon>
        <taxon>Shewanella</taxon>
    </lineage>
</organism>
<proteinExistence type="inferred from homology"/>
<feature type="chain" id="PRO_0000282796" description="Ribosomal RNA large subunit methyltransferase E">
    <location>
        <begin position="1"/>
        <end position="209"/>
    </location>
</feature>
<feature type="active site" description="Proton acceptor" evidence="1">
    <location>
        <position position="164"/>
    </location>
</feature>
<feature type="binding site" evidence="1">
    <location>
        <position position="63"/>
    </location>
    <ligand>
        <name>S-adenosyl-L-methionine</name>
        <dbReference type="ChEBI" id="CHEBI:59789"/>
    </ligand>
</feature>
<feature type="binding site" evidence="1">
    <location>
        <position position="65"/>
    </location>
    <ligand>
        <name>S-adenosyl-L-methionine</name>
        <dbReference type="ChEBI" id="CHEBI:59789"/>
    </ligand>
</feature>
<feature type="binding site" evidence="1">
    <location>
        <position position="83"/>
    </location>
    <ligand>
        <name>S-adenosyl-L-methionine</name>
        <dbReference type="ChEBI" id="CHEBI:59789"/>
    </ligand>
</feature>
<feature type="binding site" evidence="1">
    <location>
        <position position="99"/>
    </location>
    <ligand>
        <name>S-adenosyl-L-methionine</name>
        <dbReference type="ChEBI" id="CHEBI:59789"/>
    </ligand>
</feature>
<feature type="binding site" evidence="1">
    <location>
        <position position="124"/>
    </location>
    <ligand>
        <name>S-adenosyl-L-methionine</name>
        <dbReference type="ChEBI" id="CHEBI:59789"/>
    </ligand>
</feature>
<accession>Q086I0</accession>
<evidence type="ECO:0000255" key="1">
    <source>
        <dbReference type="HAMAP-Rule" id="MF_01547"/>
    </source>
</evidence>
<name>RLME_SHEFN</name>
<reference key="1">
    <citation type="submission" date="2006-08" db="EMBL/GenBank/DDBJ databases">
        <title>Complete sequence of Shewanella frigidimarina NCIMB 400.</title>
        <authorList>
            <consortium name="US DOE Joint Genome Institute"/>
            <person name="Copeland A."/>
            <person name="Lucas S."/>
            <person name="Lapidus A."/>
            <person name="Barry K."/>
            <person name="Detter J.C."/>
            <person name="Glavina del Rio T."/>
            <person name="Hammon N."/>
            <person name="Israni S."/>
            <person name="Dalin E."/>
            <person name="Tice H."/>
            <person name="Pitluck S."/>
            <person name="Fredrickson J.K."/>
            <person name="Kolker E."/>
            <person name="McCuel L.A."/>
            <person name="DiChristina T."/>
            <person name="Nealson K.H."/>
            <person name="Newman D."/>
            <person name="Tiedje J.M."/>
            <person name="Zhou J."/>
            <person name="Romine M.F."/>
            <person name="Culley D.E."/>
            <person name="Serres M."/>
            <person name="Chertkov O."/>
            <person name="Brettin T."/>
            <person name="Bruce D."/>
            <person name="Han C."/>
            <person name="Tapia R."/>
            <person name="Gilna P."/>
            <person name="Schmutz J."/>
            <person name="Larimer F."/>
            <person name="Land M."/>
            <person name="Hauser L."/>
            <person name="Kyrpides N."/>
            <person name="Mikhailova N."/>
            <person name="Richardson P."/>
        </authorList>
    </citation>
    <scope>NUCLEOTIDE SEQUENCE [LARGE SCALE GENOMIC DNA]</scope>
    <source>
        <strain>NCIMB 400</strain>
    </source>
</reference>
<keyword id="KW-0963">Cytoplasm</keyword>
<keyword id="KW-0489">Methyltransferase</keyword>
<keyword id="KW-1185">Reference proteome</keyword>
<keyword id="KW-0698">rRNA processing</keyword>
<keyword id="KW-0949">S-adenosyl-L-methionine</keyword>
<keyword id="KW-0808">Transferase</keyword>
<gene>
    <name evidence="1" type="primary">rlmE</name>
    <name evidence="1" type="synonym">ftsJ</name>
    <name evidence="1" type="synonym">rrmJ</name>
    <name type="ordered locus">Sfri_0982</name>
</gene>
<dbReference type="EC" id="2.1.1.166" evidence="1"/>
<dbReference type="EMBL" id="CP000447">
    <property type="protein sequence ID" value="ABI70835.1"/>
    <property type="molecule type" value="Genomic_DNA"/>
</dbReference>
<dbReference type="RefSeq" id="WP_011636456.1">
    <property type="nucleotide sequence ID" value="NC_008345.1"/>
</dbReference>
<dbReference type="SMR" id="Q086I0"/>
<dbReference type="STRING" id="318167.Sfri_0982"/>
<dbReference type="KEGG" id="sfr:Sfri_0982"/>
<dbReference type="eggNOG" id="COG0293">
    <property type="taxonomic scope" value="Bacteria"/>
</dbReference>
<dbReference type="HOGENOM" id="CLU_009422_4_0_6"/>
<dbReference type="OrthoDB" id="9790080at2"/>
<dbReference type="Proteomes" id="UP000000684">
    <property type="component" value="Chromosome"/>
</dbReference>
<dbReference type="GO" id="GO:0005737">
    <property type="term" value="C:cytoplasm"/>
    <property type="evidence" value="ECO:0007669"/>
    <property type="project" value="UniProtKB-SubCell"/>
</dbReference>
<dbReference type="GO" id="GO:0008650">
    <property type="term" value="F:rRNA (uridine-2'-O-)-methyltransferase activity"/>
    <property type="evidence" value="ECO:0007669"/>
    <property type="project" value="UniProtKB-UniRule"/>
</dbReference>
<dbReference type="FunFam" id="3.40.50.150:FF:000005">
    <property type="entry name" value="Ribosomal RNA large subunit methyltransferase E"/>
    <property type="match status" value="1"/>
</dbReference>
<dbReference type="Gene3D" id="3.40.50.150">
    <property type="entry name" value="Vaccinia Virus protein VP39"/>
    <property type="match status" value="1"/>
</dbReference>
<dbReference type="HAMAP" id="MF_01547">
    <property type="entry name" value="RNA_methyltr_E"/>
    <property type="match status" value="1"/>
</dbReference>
<dbReference type="InterPro" id="IPR050082">
    <property type="entry name" value="RNA_methyltr_RlmE"/>
</dbReference>
<dbReference type="InterPro" id="IPR002877">
    <property type="entry name" value="RNA_MeTrfase_FtsJ_dom"/>
</dbReference>
<dbReference type="InterPro" id="IPR015507">
    <property type="entry name" value="rRNA-MeTfrase_E"/>
</dbReference>
<dbReference type="InterPro" id="IPR029063">
    <property type="entry name" value="SAM-dependent_MTases_sf"/>
</dbReference>
<dbReference type="NCBIfam" id="NF008390">
    <property type="entry name" value="PRK11188.1"/>
    <property type="match status" value="1"/>
</dbReference>
<dbReference type="PANTHER" id="PTHR10920">
    <property type="entry name" value="RIBOSOMAL RNA METHYLTRANSFERASE"/>
    <property type="match status" value="1"/>
</dbReference>
<dbReference type="PANTHER" id="PTHR10920:SF18">
    <property type="entry name" value="RRNA METHYLTRANSFERASE 2, MITOCHONDRIAL"/>
    <property type="match status" value="1"/>
</dbReference>
<dbReference type="Pfam" id="PF01728">
    <property type="entry name" value="FtsJ"/>
    <property type="match status" value="1"/>
</dbReference>
<dbReference type="PIRSF" id="PIRSF005461">
    <property type="entry name" value="23S_rRNA_mtase"/>
    <property type="match status" value="1"/>
</dbReference>
<dbReference type="SUPFAM" id="SSF53335">
    <property type="entry name" value="S-adenosyl-L-methionine-dependent methyltransferases"/>
    <property type="match status" value="1"/>
</dbReference>
<protein>
    <recommendedName>
        <fullName evidence="1">Ribosomal RNA large subunit methyltransferase E</fullName>
        <ecNumber evidence="1">2.1.1.166</ecNumber>
    </recommendedName>
    <alternativeName>
        <fullName evidence="1">23S rRNA Um2552 methyltransferase</fullName>
    </alternativeName>
    <alternativeName>
        <fullName evidence="1">rRNA (uridine-2'-O-)-methyltransferase</fullName>
    </alternativeName>
</protein>
<comment type="function">
    <text evidence="1">Specifically methylates the uridine in position 2552 of 23S rRNA at the 2'-O position of the ribose in the fully assembled 50S ribosomal subunit.</text>
</comment>
<comment type="catalytic activity">
    <reaction evidence="1">
        <text>uridine(2552) in 23S rRNA + S-adenosyl-L-methionine = 2'-O-methyluridine(2552) in 23S rRNA + S-adenosyl-L-homocysteine + H(+)</text>
        <dbReference type="Rhea" id="RHEA:42720"/>
        <dbReference type="Rhea" id="RHEA-COMP:10202"/>
        <dbReference type="Rhea" id="RHEA-COMP:10203"/>
        <dbReference type="ChEBI" id="CHEBI:15378"/>
        <dbReference type="ChEBI" id="CHEBI:57856"/>
        <dbReference type="ChEBI" id="CHEBI:59789"/>
        <dbReference type="ChEBI" id="CHEBI:65315"/>
        <dbReference type="ChEBI" id="CHEBI:74478"/>
        <dbReference type="EC" id="2.1.1.166"/>
    </reaction>
</comment>
<comment type="subcellular location">
    <subcellularLocation>
        <location evidence="1">Cytoplasm</location>
    </subcellularLocation>
</comment>
<comment type="similarity">
    <text evidence="1">Belongs to the class I-like SAM-binding methyltransferase superfamily. RNA methyltransferase RlmE family.</text>
</comment>